<comment type="function">
    <text evidence="1">Part of the Tol-Pal system, which plays a role in outer membrane invagination during cell division and is important for maintaining outer membrane integrity. TolB occupies a key intermediary position in the Tol-Pal system because it communicates directly with both membrane-embedded components, Pal in the outer membrane and TolA in the inner membrane.</text>
</comment>
<comment type="subunit">
    <text evidence="1">The Tol-Pal system is composed of five core proteins: the inner membrane proteins TolA, TolQ and TolR, the periplasmic protein TolB and the outer membrane protein Pal. They form a network linking the inner and outer membranes and the peptidoglycan layer.</text>
</comment>
<comment type="subcellular location">
    <subcellularLocation>
        <location evidence="1">Periplasm</location>
    </subcellularLocation>
</comment>
<comment type="similarity">
    <text evidence="1 2">Belongs to the TolB family.</text>
</comment>
<feature type="signal peptide" evidence="1">
    <location>
        <begin position="1"/>
        <end position="21"/>
    </location>
</feature>
<feature type="chain" id="PRO_0000034648" description="Tol-Pal system protein TolB" evidence="1">
    <location>
        <begin position="22"/>
        <end position="430"/>
    </location>
</feature>
<name>TOLB_ECO57</name>
<protein>
    <recommendedName>
        <fullName evidence="1">Tol-Pal system protein TolB</fullName>
    </recommendedName>
</protein>
<evidence type="ECO:0000255" key="1">
    <source>
        <dbReference type="HAMAP-Rule" id="MF_00671"/>
    </source>
</evidence>
<evidence type="ECO:0000305" key="2"/>
<sequence>MKQALRVAFGFLILWASVLHAEVRIVIDSGVDSGRPIGVVPFQWAGPGAAPEDIGGIVAADLRNSGKFNPLDRARLPQQPGSAQEVQPAAWSALGIDAVVVGQVTPNPDGSYNVAYQLVDTGGAPGTVLAQNSYKVNKQWLRYAGHTASDEVFEKLTGIKGAFRTRIAYVVQTNGGQFPYELRVSDYDGYNQFVVHRSPQPLMSPAWSPDGSKLAYVTFESGRSALVIQTLANGAVRQVASFPRHNGAPAFSPDGSKLAFALSKTGSLNLYVMDLASGQIRQVTDGRSNNTEPTWFPDSQNLAFTSDQAGRPQVYKVNINGGAPQRITWEGSQNQDADVSSDGKFMVMVSSNGGQQHIAKQDLATGGVQVLSSTFLDETPSLAPNGTMVIYSSSQGMGSVLNLVSTDGRFKARLPATDGQVKFPAWSPYL</sequence>
<dbReference type="EMBL" id="AE005174">
    <property type="protein sequence ID" value="AAG55076.1"/>
    <property type="molecule type" value="Genomic_DNA"/>
</dbReference>
<dbReference type="EMBL" id="BA000007">
    <property type="protein sequence ID" value="BAB34198.1"/>
    <property type="molecule type" value="Genomic_DNA"/>
</dbReference>
<dbReference type="PIR" id="G90725">
    <property type="entry name" value="G90725"/>
</dbReference>
<dbReference type="PIR" id="H85576">
    <property type="entry name" value="H85576"/>
</dbReference>
<dbReference type="RefSeq" id="NP_308802.1">
    <property type="nucleotide sequence ID" value="NC_002695.1"/>
</dbReference>
<dbReference type="RefSeq" id="WP_001295307.1">
    <property type="nucleotide sequence ID" value="NZ_VOAI01000019.1"/>
</dbReference>
<dbReference type="SMR" id="P0A857"/>
<dbReference type="IntAct" id="P0A857">
    <property type="interactions" value="1"/>
</dbReference>
<dbReference type="MINT" id="P0A857"/>
<dbReference type="STRING" id="155864.Z0908"/>
<dbReference type="GeneID" id="917506"/>
<dbReference type="GeneID" id="93776744"/>
<dbReference type="KEGG" id="ece:Z0908"/>
<dbReference type="KEGG" id="ecs:ECs_0775"/>
<dbReference type="PATRIC" id="fig|386585.9.peg.894"/>
<dbReference type="eggNOG" id="COG0823">
    <property type="taxonomic scope" value="Bacteria"/>
</dbReference>
<dbReference type="HOGENOM" id="CLU_047123_0_0_6"/>
<dbReference type="OMA" id="VREPSWG"/>
<dbReference type="Proteomes" id="UP000000558">
    <property type="component" value="Chromosome"/>
</dbReference>
<dbReference type="Proteomes" id="UP000002519">
    <property type="component" value="Chromosome"/>
</dbReference>
<dbReference type="GO" id="GO:0042597">
    <property type="term" value="C:periplasmic space"/>
    <property type="evidence" value="ECO:0007669"/>
    <property type="project" value="UniProtKB-SubCell"/>
</dbReference>
<dbReference type="GO" id="GO:0051301">
    <property type="term" value="P:cell division"/>
    <property type="evidence" value="ECO:0007669"/>
    <property type="project" value="UniProtKB-UniRule"/>
</dbReference>
<dbReference type="GO" id="GO:0017038">
    <property type="term" value="P:protein import"/>
    <property type="evidence" value="ECO:0007669"/>
    <property type="project" value="InterPro"/>
</dbReference>
<dbReference type="FunFam" id="2.120.10.30:FF:000022">
    <property type="entry name" value="Tol-Pal system protein TolB"/>
    <property type="match status" value="1"/>
</dbReference>
<dbReference type="FunFam" id="3.40.50.10070:FF:000001">
    <property type="entry name" value="Tol-Pal system protein TolB"/>
    <property type="match status" value="1"/>
</dbReference>
<dbReference type="Gene3D" id="2.120.10.30">
    <property type="entry name" value="TolB, C-terminal domain"/>
    <property type="match status" value="1"/>
</dbReference>
<dbReference type="Gene3D" id="3.40.50.10070">
    <property type="entry name" value="TolB, N-terminal domain"/>
    <property type="match status" value="1"/>
</dbReference>
<dbReference type="HAMAP" id="MF_00671">
    <property type="entry name" value="TolB"/>
    <property type="match status" value="1"/>
</dbReference>
<dbReference type="InterPro" id="IPR011042">
    <property type="entry name" value="6-blade_b-propeller_TolB-like"/>
</dbReference>
<dbReference type="InterPro" id="IPR011659">
    <property type="entry name" value="PD40"/>
</dbReference>
<dbReference type="InterPro" id="IPR014167">
    <property type="entry name" value="Tol-Pal_TolB"/>
</dbReference>
<dbReference type="InterPro" id="IPR007195">
    <property type="entry name" value="TolB_N"/>
</dbReference>
<dbReference type="NCBIfam" id="TIGR02800">
    <property type="entry name" value="propeller_TolB"/>
    <property type="match status" value="1"/>
</dbReference>
<dbReference type="PANTHER" id="PTHR36842:SF1">
    <property type="entry name" value="PROTEIN TOLB"/>
    <property type="match status" value="1"/>
</dbReference>
<dbReference type="PANTHER" id="PTHR36842">
    <property type="entry name" value="PROTEIN TOLB HOMOLOG"/>
    <property type="match status" value="1"/>
</dbReference>
<dbReference type="Pfam" id="PF07676">
    <property type="entry name" value="PD40"/>
    <property type="match status" value="4"/>
</dbReference>
<dbReference type="Pfam" id="PF04052">
    <property type="entry name" value="TolB_N"/>
    <property type="match status" value="1"/>
</dbReference>
<dbReference type="SUPFAM" id="SSF52964">
    <property type="entry name" value="TolB, N-terminal domain"/>
    <property type="match status" value="1"/>
</dbReference>
<dbReference type="SUPFAM" id="SSF69304">
    <property type="entry name" value="Tricorn protease N-terminal domain"/>
    <property type="match status" value="1"/>
</dbReference>
<keyword id="KW-0131">Cell cycle</keyword>
<keyword id="KW-0132">Cell division</keyword>
<keyword id="KW-0574">Periplasm</keyword>
<keyword id="KW-1185">Reference proteome</keyword>
<keyword id="KW-0732">Signal</keyword>
<reference key="1">
    <citation type="journal article" date="2001" name="Nature">
        <title>Genome sequence of enterohaemorrhagic Escherichia coli O157:H7.</title>
        <authorList>
            <person name="Perna N.T."/>
            <person name="Plunkett G. III"/>
            <person name="Burland V."/>
            <person name="Mau B."/>
            <person name="Glasner J.D."/>
            <person name="Rose D.J."/>
            <person name="Mayhew G.F."/>
            <person name="Evans P.S."/>
            <person name="Gregor J."/>
            <person name="Kirkpatrick H.A."/>
            <person name="Posfai G."/>
            <person name="Hackett J."/>
            <person name="Klink S."/>
            <person name="Boutin A."/>
            <person name="Shao Y."/>
            <person name="Miller L."/>
            <person name="Grotbeck E.J."/>
            <person name="Davis N.W."/>
            <person name="Lim A."/>
            <person name="Dimalanta E.T."/>
            <person name="Potamousis K."/>
            <person name="Apodaca J."/>
            <person name="Anantharaman T.S."/>
            <person name="Lin J."/>
            <person name="Yen G."/>
            <person name="Schwartz D.C."/>
            <person name="Welch R.A."/>
            <person name="Blattner F.R."/>
        </authorList>
    </citation>
    <scope>NUCLEOTIDE SEQUENCE [LARGE SCALE GENOMIC DNA]</scope>
    <source>
        <strain>O157:H7 / EDL933 / ATCC 700927 / EHEC</strain>
    </source>
</reference>
<reference key="2">
    <citation type="journal article" date="2001" name="DNA Res.">
        <title>Complete genome sequence of enterohemorrhagic Escherichia coli O157:H7 and genomic comparison with a laboratory strain K-12.</title>
        <authorList>
            <person name="Hayashi T."/>
            <person name="Makino K."/>
            <person name="Ohnishi M."/>
            <person name="Kurokawa K."/>
            <person name="Ishii K."/>
            <person name="Yokoyama K."/>
            <person name="Han C.-G."/>
            <person name="Ohtsubo E."/>
            <person name="Nakayama K."/>
            <person name="Murata T."/>
            <person name="Tanaka M."/>
            <person name="Tobe T."/>
            <person name="Iida T."/>
            <person name="Takami H."/>
            <person name="Honda T."/>
            <person name="Sasakawa C."/>
            <person name="Ogasawara N."/>
            <person name="Yasunaga T."/>
            <person name="Kuhara S."/>
            <person name="Shiba T."/>
            <person name="Hattori M."/>
            <person name="Shinagawa H."/>
        </authorList>
    </citation>
    <scope>NUCLEOTIDE SEQUENCE [LARGE SCALE GENOMIC DNA]</scope>
    <source>
        <strain>O157:H7 / Sakai / RIMD 0509952 / EHEC</strain>
    </source>
</reference>
<proteinExistence type="inferred from homology"/>
<gene>
    <name evidence="1" type="primary">tolB</name>
    <name type="ordered locus">Z0908</name>
    <name type="ordered locus">ECs0775</name>
</gene>
<accession>P0A857</accession>
<accession>P19935</accession>
<organism>
    <name type="scientific">Escherichia coli O157:H7</name>
    <dbReference type="NCBI Taxonomy" id="83334"/>
    <lineage>
        <taxon>Bacteria</taxon>
        <taxon>Pseudomonadati</taxon>
        <taxon>Pseudomonadota</taxon>
        <taxon>Gammaproteobacteria</taxon>
        <taxon>Enterobacterales</taxon>
        <taxon>Enterobacteriaceae</taxon>
        <taxon>Escherichia</taxon>
    </lineage>
</organism>